<comment type="catalytic activity">
    <reaction evidence="1">
        <text>L-histidinol phosphate + 2-oxoglutarate = 3-(imidazol-4-yl)-2-oxopropyl phosphate + L-glutamate</text>
        <dbReference type="Rhea" id="RHEA:23744"/>
        <dbReference type="ChEBI" id="CHEBI:16810"/>
        <dbReference type="ChEBI" id="CHEBI:29985"/>
        <dbReference type="ChEBI" id="CHEBI:57766"/>
        <dbReference type="ChEBI" id="CHEBI:57980"/>
        <dbReference type="EC" id="2.6.1.9"/>
    </reaction>
</comment>
<comment type="cofactor">
    <cofactor evidence="1">
        <name>pyridoxal 5'-phosphate</name>
        <dbReference type="ChEBI" id="CHEBI:597326"/>
    </cofactor>
</comment>
<comment type="pathway">
    <text evidence="1">Amino-acid biosynthesis; L-histidine biosynthesis; L-histidine from 5-phospho-alpha-D-ribose 1-diphosphate: step 7/9.</text>
</comment>
<comment type="subunit">
    <text evidence="1">Homodimer.</text>
</comment>
<comment type="similarity">
    <text evidence="1">Belongs to the class-II pyridoxal-phosphate-dependent aminotransferase family. Histidinol-phosphate aminotransferase subfamily.</text>
</comment>
<reference key="1">
    <citation type="journal article" date="2002" name="Nat. Biotechnol.">
        <title>Genome sequence of the dissimilatory metal ion-reducing bacterium Shewanella oneidensis.</title>
        <authorList>
            <person name="Heidelberg J.F."/>
            <person name="Paulsen I.T."/>
            <person name="Nelson K.E."/>
            <person name="Gaidos E.J."/>
            <person name="Nelson W.C."/>
            <person name="Read T.D."/>
            <person name="Eisen J.A."/>
            <person name="Seshadri R."/>
            <person name="Ward N.L."/>
            <person name="Methe B.A."/>
            <person name="Clayton R.A."/>
            <person name="Meyer T."/>
            <person name="Tsapin A."/>
            <person name="Scott J."/>
            <person name="Beanan M.J."/>
            <person name="Brinkac L.M."/>
            <person name="Daugherty S.C."/>
            <person name="DeBoy R.T."/>
            <person name="Dodson R.J."/>
            <person name="Durkin A.S."/>
            <person name="Haft D.H."/>
            <person name="Kolonay J.F."/>
            <person name="Madupu R."/>
            <person name="Peterson J.D."/>
            <person name="Umayam L.A."/>
            <person name="White O."/>
            <person name="Wolf A.M."/>
            <person name="Vamathevan J.J."/>
            <person name="Weidman J.F."/>
            <person name="Impraim M."/>
            <person name="Lee K."/>
            <person name="Berry K.J."/>
            <person name="Lee C."/>
            <person name="Mueller J."/>
            <person name="Khouri H.M."/>
            <person name="Gill J."/>
            <person name="Utterback T.R."/>
            <person name="McDonald L.A."/>
            <person name="Feldblyum T.V."/>
            <person name="Smith H.O."/>
            <person name="Venter J.C."/>
            <person name="Nealson K.H."/>
            <person name="Fraser C.M."/>
        </authorList>
    </citation>
    <scope>NUCLEOTIDE SEQUENCE [LARGE SCALE GENOMIC DNA]</scope>
    <source>
        <strain>ATCC 700550 / JCM 31522 / CIP 106686 / LMG 19005 / NCIMB 14063 / MR-1</strain>
    </source>
</reference>
<sequence length="391" mass="42350">MSQEPICQEPMSNVTVRSVPSDNSASNPLDKIVIESATLAARLARPELLELTPYQSARRLGGKGDIWINANESPFNNVAVGELDLTKLNRYPECQPPALINAYSQYSGVVESKIVASRGADEAIELLIRAFCIPGIDSIATFGPTYGMYAISAQTFNVGVKALSLSAEYGLPADFATAARGAKLVFICNPNNPTGTVIDKARIEQAIQALPDSIVVVDEAYIEFCPEYSVADLLETYPNLVVLRTLSKAFALAGARCGFLLANEEIIEIIMRVIAPYPVPLPVSEVAEQALSPAGIARMKTQVKELNTQGERLAAALNLYCEQWGGAVLKPNGNYVLAEFDDVAKVAKLLTDNGIVARAYKDPRLAKAIRFSFSSQVDTDRLVSLFESQKR</sequence>
<dbReference type="EC" id="2.6.1.9" evidence="1"/>
<dbReference type="EMBL" id="AE014299">
    <property type="protein sequence ID" value="AAN55119.1"/>
    <property type="molecule type" value="Genomic_DNA"/>
</dbReference>
<dbReference type="RefSeq" id="NP_717675.1">
    <property type="nucleotide sequence ID" value="NC_004347.2"/>
</dbReference>
<dbReference type="RefSeq" id="WP_011072139.1">
    <property type="nucleotide sequence ID" value="NC_004347.2"/>
</dbReference>
<dbReference type="SMR" id="Q8EFB2"/>
<dbReference type="STRING" id="211586.SO_2072"/>
<dbReference type="PaxDb" id="211586-SO_2072"/>
<dbReference type="KEGG" id="son:SO_2072"/>
<dbReference type="PATRIC" id="fig|211586.12.peg.1990"/>
<dbReference type="eggNOG" id="COG0079">
    <property type="taxonomic scope" value="Bacteria"/>
</dbReference>
<dbReference type="HOGENOM" id="CLU_017584_3_1_6"/>
<dbReference type="OrthoDB" id="9813612at2"/>
<dbReference type="PhylomeDB" id="Q8EFB2"/>
<dbReference type="BioCyc" id="SONE211586:G1GMP-1905-MONOMER"/>
<dbReference type="UniPathway" id="UPA00031">
    <property type="reaction ID" value="UER00012"/>
</dbReference>
<dbReference type="Proteomes" id="UP000008186">
    <property type="component" value="Chromosome"/>
</dbReference>
<dbReference type="GO" id="GO:0004400">
    <property type="term" value="F:histidinol-phosphate transaminase activity"/>
    <property type="evidence" value="ECO:0007669"/>
    <property type="project" value="UniProtKB-UniRule"/>
</dbReference>
<dbReference type="GO" id="GO:0030170">
    <property type="term" value="F:pyridoxal phosphate binding"/>
    <property type="evidence" value="ECO:0007669"/>
    <property type="project" value="InterPro"/>
</dbReference>
<dbReference type="GO" id="GO:0000105">
    <property type="term" value="P:L-histidine biosynthetic process"/>
    <property type="evidence" value="ECO:0007669"/>
    <property type="project" value="UniProtKB-UniRule"/>
</dbReference>
<dbReference type="CDD" id="cd00609">
    <property type="entry name" value="AAT_like"/>
    <property type="match status" value="1"/>
</dbReference>
<dbReference type="Gene3D" id="3.90.1150.10">
    <property type="entry name" value="Aspartate Aminotransferase, domain 1"/>
    <property type="match status" value="1"/>
</dbReference>
<dbReference type="Gene3D" id="3.40.640.10">
    <property type="entry name" value="Type I PLP-dependent aspartate aminotransferase-like (Major domain)"/>
    <property type="match status" value="1"/>
</dbReference>
<dbReference type="HAMAP" id="MF_01023">
    <property type="entry name" value="HisC_aminotrans_2"/>
    <property type="match status" value="1"/>
</dbReference>
<dbReference type="InterPro" id="IPR001917">
    <property type="entry name" value="Aminotrans_II_pyridoxalP_BS"/>
</dbReference>
<dbReference type="InterPro" id="IPR004839">
    <property type="entry name" value="Aminotransferase_I/II_large"/>
</dbReference>
<dbReference type="InterPro" id="IPR005861">
    <property type="entry name" value="HisP_aminotrans"/>
</dbReference>
<dbReference type="InterPro" id="IPR015424">
    <property type="entry name" value="PyrdxlP-dep_Trfase"/>
</dbReference>
<dbReference type="InterPro" id="IPR015421">
    <property type="entry name" value="PyrdxlP-dep_Trfase_major"/>
</dbReference>
<dbReference type="InterPro" id="IPR015422">
    <property type="entry name" value="PyrdxlP-dep_Trfase_small"/>
</dbReference>
<dbReference type="NCBIfam" id="TIGR01141">
    <property type="entry name" value="hisC"/>
    <property type="match status" value="1"/>
</dbReference>
<dbReference type="PANTHER" id="PTHR42885:SF2">
    <property type="entry name" value="HISTIDINOL-PHOSPHATE AMINOTRANSFERASE"/>
    <property type="match status" value="1"/>
</dbReference>
<dbReference type="PANTHER" id="PTHR42885">
    <property type="entry name" value="HISTIDINOL-PHOSPHATE AMINOTRANSFERASE-RELATED"/>
    <property type="match status" value="1"/>
</dbReference>
<dbReference type="Pfam" id="PF00155">
    <property type="entry name" value="Aminotran_1_2"/>
    <property type="match status" value="1"/>
</dbReference>
<dbReference type="SUPFAM" id="SSF53383">
    <property type="entry name" value="PLP-dependent transferases"/>
    <property type="match status" value="1"/>
</dbReference>
<dbReference type="PROSITE" id="PS00599">
    <property type="entry name" value="AA_TRANSFER_CLASS_2"/>
    <property type="match status" value="1"/>
</dbReference>
<name>HIS8_SHEON</name>
<protein>
    <recommendedName>
        <fullName evidence="1">Histidinol-phosphate aminotransferase</fullName>
        <ecNumber evidence="1">2.6.1.9</ecNumber>
    </recommendedName>
    <alternativeName>
        <fullName evidence="1">Imidazole acetol-phosphate transaminase</fullName>
    </alternativeName>
</protein>
<gene>
    <name evidence="1" type="primary">hisC</name>
    <name type="ordered locus">SO_2072</name>
</gene>
<keyword id="KW-0028">Amino-acid biosynthesis</keyword>
<keyword id="KW-0032">Aminotransferase</keyword>
<keyword id="KW-0368">Histidine biosynthesis</keyword>
<keyword id="KW-0663">Pyridoxal phosphate</keyword>
<keyword id="KW-1185">Reference proteome</keyword>
<keyword id="KW-0808">Transferase</keyword>
<accession>Q8EFB2</accession>
<proteinExistence type="inferred from homology"/>
<organism>
    <name type="scientific">Shewanella oneidensis (strain ATCC 700550 / JCM 31522 / CIP 106686 / LMG 19005 / NCIMB 14063 / MR-1)</name>
    <dbReference type="NCBI Taxonomy" id="211586"/>
    <lineage>
        <taxon>Bacteria</taxon>
        <taxon>Pseudomonadati</taxon>
        <taxon>Pseudomonadota</taxon>
        <taxon>Gammaproteobacteria</taxon>
        <taxon>Alteromonadales</taxon>
        <taxon>Shewanellaceae</taxon>
        <taxon>Shewanella</taxon>
    </lineage>
</organism>
<evidence type="ECO:0000255" key="1">
    <source>
        <dbReference type="HAMAP-Rule" id="MF_01023"/>
    </source>
</evidence>
<feature type="chain" id="PRO_0000153445" description="Histidinol-phosphate aminotransferase">
    <location>
        <begin position="1"/>
        <end position="391"/>
    </location>
</feature>
<feature type="modified residue" description="N6-(pyridoxal phosphate)lysine" evidence="1">
    <location>
        <position position="248"/>
    </location>
</feature>